<name>CIAO1_EMENI</name>
<proteinExistence type="inferred from homology"/>
<reference key="1">
    <citation type="journal article" date="2005" name="Nature">
        <title>Sequencing of Aspergillus nidulans and comparative analysis with A. fumigatus and A. oryzae.</title>
        <authorList>
            <person name="Galagan J.E."/>
            <person name="Calvo S.E."/>
            <person name="Cuomo C."/>
            <person name="Ma L.-J."/>
            <person name="Wortman J.R."/>
            <person name="Batzoglou S."/>
            <person name="Lee S.-I."/>
            <person name="Bastuerkmen M."/>
            <person name="Spevak C.C."/>
            <person name="Clutterbuck J."/>
            <person name="Kapitonov V."/>
            <person name="Jurka J."/>
            <person name="Scazzocchio C."/>
            <person name="Farman M.L."/>
            <person name="Butler J."/>
            <person name="Purcell S."/>
            <person name="Harris S."/>
            <person name="Braus G.H."/>
            <person name="Draht O."/>
            <person name="Busch S."/>
            <person name="D'Enfert C."/>
            <person name="Bouchier C."/>
            <person name="Goldman G.H."/>
            <person name="Bell-Pedersen D."/>
            <person name="Griffiths-Jones S."/>
            <person name="Doonan J.H."/>
            <person name="Yu J."/>
            <person name="Vienken K."/>
            <person name="Pain A."/>
            <person name="Freitag M."/>
            <person name="Selker E.U."/>
            <person name="Archer D.B."/>
            <person name="Penalva M.A."/>
            <person name="Oakley B.R."/>
            <person name="Momany M."/>
            <person name="Tanaka T."/>
            <person name="Kumagai T."/>
            <person name="Asai K."/>
            <person name="Machida M."/>
            <person name="Nierman W.C."/>
            <person name="Denning D.W."/>
            <person name="Caddick M.X."/>
            <person name="Hynes M."/>
            <person name="Paoletti M."/>
            <person name="Fischer R."/>
            <person name="Miller B.L."/>
            <person name="Dyer P.S."/>
            <person name="Sachs M.S."/>
            <person name="Osmani S.A."/>
            <person name="Birren B.W."/>
        </authorList>
    </citation>
    <scope>NUCLEOTIDE SEQUENCE [LARGE SCALE GENOMIC DNA]</scope>
    <source>
        <strain>FGSC A4 / ATCC 38163 / CBS 112.46 / NRRL 194 / M139</strain>
    </source>
</reference>
<reference key="2">
    <citation type="journal article" date="2009" name="Fungal Genet. Biol.">
        <title>The 2008 update of the Aspergillus nidulans genome annotation: a community effort.</title>
        <authorList>
            <person name="Wortman J.R."/>
            <person name="Gilsenan J.M."/>
            <person name="Joardar V."/>
            <person name="Deegan J."/>
            <person name="Clutterbuck J."/>
            <person name="Andersen M.R."/>
            <person name="Archer D."/>
            <person name="Bencina M."/>
            <person name="Braus G."/>
            <person name="Coutinho P."/>
            <person name="von Dohren H."/>
            <person name="Doonan J."/>
            <person name="Driessen A.J."/>
            <person name="Durek P."/>
            <person name="Espeso E."/>
            <person name="Fekete E."/>
            <person name="Flipphi M."/>
            <person name="Estrada C.G."/>
            <person name="Geysens S."/>
            <person name="Goldman G."/>
            <person name="de Groot P.W."/>
            <person name="Hansen K."/>
            <person name="Harris S.D."/>
            <person name="Heinekamp T."/>
            <person name="Helmstaedt K."/>
            <person name="Henrissat B."/>
            <person name="Hofmann G."/>
            <person name="Homan T."/>
            <person name="Horio T."/>
            <person name="Horiuchi H."/>
            <person name="James S."/>
            <person name="Jones M."/>
            <person name="Karaffa L."/>
            <person name="Karanyi Z."/>
            <person name="Kato M."/>
            <person name="Keller N."/>
            <person name="Kelly D.E."/>
            <person name="Kiel J.A."/>
            <person name="Kim J.M."/>
            <person name="van der Klei I.J."/>
            <person name="Klis F.M."/>
            <person name="Kovalchuk A."/>
            <person name="Krasevec N."/>
            <person name="Kubicek C.P."/>
            <person name="Liu B."/>
            <person name="Maccabe A."/>
            <person name="Meyer V."/>
            <person name="Mirabito P."/>
            <person name="Miskei M."/>
            <person name="Mos M."/>
            <person name="Mullins J."/>
            <person name="Nelson D.R."/>
            <person name="Nielsen J."/>
            <person name="Oakley B.R."/>
            <person name="Osmani S.A."/>
            <person name="Pakula T."/>
            <person name="Paszewski A."/>
            <person name="Paulsen I."/>
            <person name="Pilsyk S."/>
            <person name="Pocsi I."/>
            <person name="Punt P.J."/>
            <person name="Ram A.F."/>
            <person name="Ren Q."/>
            <person name="Robellet X."/>
            <person name="Robson G."/>
            <person name="Seiboth B."/>
            <person name="van Solingen P."/>
            <person name="Specht T."/>
            <person name="Sun J."/>
            <person name="Taheri-Talesh N."/>
            <person name="Takeshita N."/>
            <person name="Ussery D."/>
            <person name="vanKuyk P.A."/>
            <person name="Visser H."/>
            <person name="van de Vondervoort P.J."/>
            <person name="de Vries R.P."/>
            <person name="Walton J."/>
            <person name="Xiang X."/>
            <person name="Xiong Y."/>
            <person name="Zeng A.P."/>
            <person name="Brandt B.W."/>
            <person name="Cornell M.J."/>
            <person name="van den Hondel C.A."/>
            <person name="Visser J."/>
            <person name="Oliver S.G."/>
            <person name="Turner G."/>
        </authorList>
    </citation>
    <scope>GENOME REANNOTATION</scope>
    <source>
        <strain>FGSC A4 / ATCC 38163 / CBS 112.46 / NRRL 194 / M139</strain>
    </source>
</reference>
<feature type="chain" id="PRO_0000382515" description="Probable cytosolic iron-sulfur protein assembly protein 1">
    <location>
        <begin position="1"/>
        <end position="446"/>
    </location>
</feature>
<feature type="repeat" description="WD 1">
    <location>
        <begin position="22"/>
        <end position="64"/>
    </location>
</feature>
<feature type="repeat" description="WD 2">
    <location>
        <begin position="68"/>
        <end position="110"/>
    </location>
</feature>
<feature type="repeat" description="WD 3">
    <location>
        <begin position="144"/>
        <end position="183"/>
    </location>
</feature>
<feature type="repeat" description="WD 4">
    <location>
        <begin position="191"/>
        <end position="230"/>
    </location>
</feature>
<feature type="repeat" description="WD 5">
    <location>
        <begin position="235"/>
        <end position="300"/>
    </location>
</feature>
<feature type="repeat" description="WD 6">
    <location>
        <begin position="328"/>
        <end position="367"/>
    </location>
</feature>
<feature type="repeat" description="WD 7">
    <location>
        <begin position="402"/>
        <end position="446"/>
    </location>
</feature>
<organism>
    <name type="scientific">Emericella nidulans (strain FGSC A4 / ATCC 38163 / CBS 112.46 / NRRL 194 / M139)</name>
    <name type="common">Aspergillus nidulans</name>
    <dbReference type="NCBI Taxonomy" id="227321"/>
    <lineage>
        <taxon>Eukaryota</taxon>
        <taxon>Fungi</taxon>
        <taxon>Dikarya</taxon>
        <taxon>Ascomycota</taxon>
        <taxon>Pezizomycotina</taxon>
        <taxon>Eurotiomycetes</taxon>
        <taxon>Eurotiomycetidae</taxon>
        <taxon>Eurotiales</taxon>
        <taxon>Aspergillaceae</taxon>
        <taxon>Aspergillus</taxon>
        <taxon>Aspergillus subgen. Nidulantes</taxon>
    </lineage>
</organism>
<accession>Q5BDJ5</accession>
<accession>C8VRU0</accession>
<keyword id="KW-1185">Reference proteome</keyword>
<keyword id="KW-0677">Repeat</keyword>
<keyword id="KW-0853">WD repeat</keyword>
<sequence length="446" mass="49425">MMTAPNVVQSSPSLALSFLSDLTPPSLERTWLTAPHPTLPLVATCSSDKTVRVYSLVNFRLLSTISGGHKRSIRTCAWKPNVSGESVLATGSFDATVGIWRRWDDYGEEETLAQGNKNTKNFGAEEDREEDEDDEWRFAVLLDGHDSEVKSVSWSASGMLLATCSRDKSIWIWEDLEDGDNNFETVAVMQEHEGDVKCVAWHPAEECLASGSYDDTIRIWREDIDDWGQVACIKGHTGTVWGIDWEDAENVPFPSTSNGVSGQEEEWKTWHALSGPRLVSCSHDQSVRVWRRQPKAQLNTAGASSIPSIIRPSGTDETWEEDVVLPHAHELPIYAVAWSRRTGLLASVGADGRLVVYEERFVSSHTKPQAMNTDEVSPNLGEGVCAPHPSTEWSIVAVVNGAHGIYEINHVAWAKRADRGRDGNKEEEVLITTADDGSIKVWTLTR</sequence>
<dbReference type="EMBL" id="AACD01000019">
    <property type="protein sequence ID" value="EAA65215.1"/>
    <property type="status" value="ALT_INIT"/>
    <property type="molecule type" value="Genomic_DNA"/>
</dbReference>
<dbReference type="EMBL" id="BN001308">
    <property type="protein sequence ID" value="CBF87600.1"/>
    <property type="molecule type" value="Genomic_DNA"/>
</dbReference>
<dbReference type="RefSeq" id="XP_658989.1">
    <property type="nucleotide sequence ID" value="XM_653897.1"/>
</dbReference>
<dbReference type="SMR" id="Q5BDJ5"/>
<dbReference type="FunCoup" id="Q5BDJ5">
    <property type="interactions" value="64"/>
</dbReference>
<dbReference type="STRING" id="227321.Q5BDJ5"/>
<dbReference type="EnsemblFungi" id="CBF87600">
    <property type="protein sequence ID" value="CBF87600"/>
    <property type="gene ID" value="ANIA_01385"/>
</dbReference>
<dbReference type="KEGG" id="ani:ANIA_01385"/>
<dbReference type="VEuPathDB" id="FungiDB:AN1385"/>
<dbReference type="eggNOG" id="KOG0645">
    <property type="taxonomic scope" value="Eukaryota"/>
</dbReference>
<dbReference type="HOGENOM" id="CLU_000288_57_8_1"/>
<dbReference type="InParanoid" id="Q5BDJ5"/>
<dbReference type="OMA" id="IREIRWS"/>
<dbReference type="OrthoDB" id="284782at2759"/>
<dbReference type="Proteomes" id="UP000000560">
    <property type="component" value="Chromosome VIII"/>
</dbReference>
<dbReference type="GO" id="GO:0097361">
    <property type="term" value="C:cytosolic [4Fe-4S] assembly targeting complex"/>
    <property type="evidence" value="ECO:0000318"/>
    <property type="project" value="GO_Central"/>
</dbReference>
<dbReference type="GO" id="GO:0016226">
    <property type="term" value="P:iron-sulfur cluster assembly"/>
    <property type="evidence" value="ECO:0000318"/>
    <property type="project" value="GO_Central"/>
</dbReference>
<dbReference type="FunFam" id="2.130.10.10:FF:000816">
    <property type="entry name" value="Probable cytosolic iron-sulfur protein assembly protein 1"/>
    <property type="match status" value="1"/>
</dbReference>
<dbReference type="Gene3D" id="2.130.10.10">
    <property type="entry name" value="YVTN repeat-like/Quinoprotein amine dehydrogenase"/>
    <property type="match status" value="1"/>
</dbReference>
<dbReference type="HAMAP" id="MF_03037">
    <property type="entry name" value="ciao1"/>
    <property type="match status" value="1"/>
</dbReference>
<dbReference type="InterPro" id="IPR028608">
    <property type="entry name" value="CIAO1/Cia1"/>
</dbReference>
<dbReference type="InterPro" id="IPR020472">
    <property type="entry name" value="G-protein_beta_WD-40_rep"/>
</dbReference>
<dbReference type="InterPro" id="IPR015943">
    <property type="entry name" value="WD40/YVTN_repeat-like_dom_sf"/>
</dbReference>
<dbReference type="InterPro" id="IPR036322">
    <property type="entry name" value="WD40_repeat_dom_sf"/>
</dbReference>
<dbReference type="InterPro" id="IPR001680">
    <property type="entry name" value="WD40_rpt"/>
</dbReference>
<dbReference type="PANTHER" id="PTHR19920:SF0">
    <property type="entry name" value="CYTOSOLIC IRON-SULFUR PROTEIN ASSEMBLY PROTEIN CIAO1-RELATED"/>
    <property type="match status" value="1"/>
</dbReference>
<dbReference type="PANTHER" id="PTHR19920">
    <property type="entry name" value="WD40 PROTEIN CIAO1"/>
    <property type="match status" value="1"/>
</dbReference>
<dbReference type="Pfam" id="PF00400">
    <property type="entry name" value="WD40"/>
    <property type="match status" value="6"/>
</dbReference>
<dbReference type="PRINTS" id="PR00320">
    <property type="entry name" value="GPROTEINBRPT"/>
</dbReference>
<dbReference type="SMART" id="SM00320">
    <property type="entry name" value="WD40"/>
    <property type="match status" value="7"/>
</dbReference>
<dbReference type="SUPFAM" id="SSF50978">
    <property type="entry name" value="WD40 repeat-like"/>
    <property type="match status" value="1"/>
</dbReference>
<dbReference type="PROSITE" id="PS50082">
    <property type="entry name" value="WD_REPEATS_2"/>
    <property type="match status" value="4"/>
</dbReference>
<dbReference type="PROSITE" id="PS50294">
    <property type="entry name" value="WD_REPEATS_REGION"/>
    <property type="match status" value="1"/>
</dbReference>
<gene>
    <name type="primary">cia1</name>
    <name type="ORF">AN1385</name>
</gene>
<protein>
    <recommendedName>
        <fullName evidence="1">Probable cytosolic iron-sulfur protein assembly protein 1</fullName>
    </recommendedName>
</protein>
<comment type="function">
    <text evidence="1">Essential component of the cytosolic iron-sulfur (Fe/S) protein assembly machinery. Required for the maturation of extramitochondrial Fe/S proteins.</text>
</comment>
<comment type="similarity">
    <text evidence="1">Belongs to the WD repeat CIA1 family.</text>
</comment>
<comment type="caution">
    <text evidence="2">It is uncertain whether Met-1 or Met-2 is the initiator.</text>
</comment>
<comment type="sequence caution" evidence="2">
    <conflict type="erroneous initiation">
        <sequence resource="EMBL-CDS" id="EAA65215"/>
    </conflict>
    <text>Truncated N-terminus.</text>
</comment>
<evidence type="ECO:0000255" key="1">
    <source>
        <dbReference type="HAMAP-Rule" id="MF_03037"/>
    </source>
</evidence>
<evidence type="ECO:0000305" key="2"/>